<proteinExistence type="inferred from homology"/>
<accession>A4ZCW4</accession>
<sequence>MLKMESTQQMASSIINSSFEAAVVAATSTLELMGIQYDYNEVYTRVKSKFDLVMDDSGVKNNLMGKAITIDQALNGKFGSAIRNRNWMADSRTVAKLDEDVNKLRMMLSSKGIDQKMRVLNACFSVKRVPGKSSSIVKCTKLMKDKLERGEVEVDDSFVEEKMEVDTINWKLRYDQLEKRFESLKHRVNEKYNTWVVKARKVNENMNSLQNVISQQQAHINELQMYNNKLERDLQSKIGSVVSSIEWYLRSMELSDDVKVDIEQQLNSIDQLNPVNAIDDFESVLRNLISDYDRLFIMFKGLLQQCNYTCTYE</sequence>
<protein>
    <recommendedName>
        <fullName evidence="1">Non-structural protein 3</fullName>
        <shortName evidence="1">NSP3</shortName>
    </recommendedName>
    <alternativeName>
        <fullName evidence="1">NCVP4</fullName>
    </alternativeName>
    <alternativeName>
        <fullName evidence="1">Non-structural RNA-binding protein 34</fullName>
        <shortName evidence="1">NS34</shortName>
    </alternativeName>
</protein>
<dbReference type="EMBL" id="DQ490535">
    <property type="protein sequence ID" value="ABF67542.1"/>
    <property type="status" value="ALT_INIT"/>
    <property type="molecule type" value="Genomic_RNA"/>
</dbReference>
<dbReference type="SMR" id="A4ZCW4"/>
<dbReference type="Proteomes" id="UP000001454">
    <property type="component" value="Genome"/>
</dbReference>
<dbReference type="GO" id="GO:0030430">
    <property type="term" value="C:host cell cytoplasm"/>
    <property type="evidence" value="ECO:0007669"/>
    <property type="project" value="UniProtKB-SubCell"/>
</dbReference>
<dbReference type="GO" id="GO:0003723">
    <property type="term" value="F:RNA binding"/>
    <property type="evidence" value="ECO:0007669"/>
    <property type="project" value="UniProtKB-UniRule"/>
</dbReference>
<dbReference type="GO" id="GO:0006417">
    <property type="term" value="P:regulation of translation"/>
    <property type="evidence" value="ECO:0007669"/>
    <property type="project" value="UniProtKB-UniRule"/>
</dbReference>
<dbReference type="CDD" id="cd20714">
    <property type="entry name" value="NSP3_rotavirus"/>
    <property type="match status" value="1"/>
</dbReference>
<dbReference type="Gene3D" id="3.30.70.1610">
    <property type="match status" value="1"/>
</dbReference>
<dbReference type="Gene3D" id="1.20.5.970">
    <property type="entry name" value="Nonstructural RNA-binding protein"/>
    <property type="match status" value="1"/>
</dbReference>
<dbReference type="Gene3D" id="6.10.280.20">
    <property type="entry name" value="Rotavirus non-structural protein NSP3, N-terminal domain"/>
    <property type="match status" value="1"/>
</dbReference>
<dbReference type="HAMAP" id="MF_04094">
    <property type="entry name" value="ROTA_A_NSP3"/>
    <property type="match status" value="1"/>
</dbReference>
<dbReference type="HAMAP" id="MF_04090">
    <property type="entry name" value="ROTA_NSP3"/>
    <property type="match status" value="1"/>
</dbReference>
<dbReference type="InterPro" id="IPR042519">
    <property type="entry name" value="NSP3_N_rotavirus"/>
</dbReference>
<dbReference type="InterPro" id="IPR036082">
    <property type="entry name" value="NSP3_sf"/>
</dbReference>
<dbReference type="InterPro" id="IPR002873">
    <property type="entry name" value="Rotavirus_NSP3"/>
</dbReference>
<dbReference type="Pfam" id="PF01665">
    <property type="entry name" value="Rota_NSP3"/>
    <property type="match status" value="1"/>
</dbReference>
<dbReference type="SUPFAM" id="SSF69903">
    <property type="entry name" value="NSP3 homodimer"/>
    <property type="match status" value="1"/>
</dbReference>
<dbReference type="SUPFAM" id="SSF58030">
    <property type="entry name" value="Rotavirus nonstructural proteins"/>
    <property type="match status" value="1"/>
</dbReference>
<comment type="function">
    <text evidence="1">Plays an important role in stimulating the translation of viral mRNAs. These mRNAs are capped but not polyadenylated, instead terminating in a conserved sequence 'GACC' at the 3' that is recognized by NSP3, which competes with host PABPC1 for EIF4G1 binding. The interaction between NSP3 and host EIF4G1 stabilizes the EIF4E-EIF4G1 interaction, thereby facilitating the initiation of capped mRNA translation.</text>
</comment>
<comment type="subunit">
    <text evidence="1">Homodimer. Interacts (via the coiled-coil region) with host ZC3H7B (via LD motif). Interacts with host EIF4G1.</text>
</comment>
<comment type="subcellular location">
    <subcellularLocation>
        <location evidence="1">Host cytoplasm</location>
    </subcellularLocation>
</comment>
<comment type="similarity">
    <text evidence="1">Belongs to the rotavirus NSP3 family.</text>
</comment>
<comment type="sequence caution">
    <conflict type="erroneous initiation">
        <sequence resource="EMBL-CDS" id="ABF67542"/>
    </conflict>
</comment>
<reference key="1">
    <citation type="journal article" date="2007" name="J. Virol.">
        <title>Evolutionary history and global spread of the emerging G12 human rotaviruses.</title>
        <authorList>
            <person name="Rahman M."/>
            <person name="Matthijnssens J."/>
            <person name="Yang X."/>
            <person name="Delbeke T."/>
            <person name="Arijs I."/>
            <person name="Taniguchi K."/>
            <person name="Iturriza-Gomara M."/>
            <person name="Iftekharuddin N."/>
            <person name="Azim T."/>
            <person name="Van Ranst M."/>
        </authorList>
    </citation>
    <scope>NUCLEOTIDE SEQUENCE [GENOMIC RNA]</scope>
</reference>
<name>NSP3_ROTH3</name>
<organism>
    <name type="scientific">Rotavirus A (strain RVA/Human/Japan/AU-1/1982/G3P3[9])</name>
    <name type="common">RV-A</name>
    <dbReference type="NCBI Taxonomy" id="39013"/>
    <lineage>
        <taxon>Viruses</taxon>
        <taxon>Riboviria</taxon>
        <taxon>Orthornavirae</taxon>
        <taxon>Duplornaviricota</taxon>
        <taxon>Resentoviricetes</taxon>
        <taxon>Reovirales</taxon>
        <taxon>Sedoreoviridae</taxon>
        <taxon>Rotavirus</taxon>
        <taxon>Rotavirus A</taxon>
    </lineage>
</organism>
<organismHost>
    <name type="scientific">Homo sapiens</name>
    <name type="common">Human</name>
    <dbReference type="NCBI Taxonomy" id="9606"/>
</organismHost>
<keyword id="KW-0175">Coiled coil</keyword>
<keyword id="KW-1035">Host cytoplasm</keyword>
<keyword id="KW-0945">Host-virus interaction</keyword>
<keyword id="KW-0694">RNA-binding</keyword>
<keyword id="KW-0810">Translation regulation</keyword>
<evidence type="ECO:0000255" key="1">
    <source>
        <dbReference type="HAMAP-Rule" id="MF_04094"/>
    </source>
</evidence>
<feature type="chain" id="PRO_0000369449" description="Non-structural protein 3">
    <location>
        <begin position="1"/>
        <end position="313"/>
    </location>
</feature>
<feature type="region of interest" description="RNA-binding" evidence="1">
    <location>
        <begin position="1"/>
        <end position="149"/>
    </location>
</feature>
<feature type="region of interest" description="Dimerization" evidence="1">
    <location>
        <begin position="150"/>
        <end position="206"/>
    </location>
</feature>
<feature type="region of interest" description="Interaction with host ZC3H7B" evidence="1">
    <location>
        <begin position="170"/>
        <end position="234"/>
    </location>
</feature>
<feature type="region of interest" description="Interaction with host EIF4G1" evidence="1">
    <location>
        <begin position="208"/>
        <end position="313"/>
    </location>
</feature>
<feature type="coiled-coil region" evidence="1">
    <location>
        <begin position="166"/>
        <end position="237"/>
    </location>
</feature>